<dbReference type="EC" id="7.2.1.1" evidence="1"/>
<dbReference type="EMBL" id="AE016795">
    <property type="protein sequence ID" value="AAO10229.1"/>
    <property type="molecule type" value="Genomic_DNA"/>
</dbReference>
<dbReference type="RefSeq" id="WP_011079729.1">
    <property type="nucleotide sequence ID" value="NC_004459.3"/>
</dbReference>
<dbReference type="SMR" id="Q8DBJ4"/>
<dbReference type="KEGG" id="vvu:VV1_1823"/>
<dbReference type="HOGENOM" id="CLU_077882_0_1_6"/>
<dbReference type="Proteomes" id="UP000002275">
    <property type="component" value="Chromosome 1"/>
</dbReference>
<dbReference type="GO" id="GO:0005886">
    <property type="term" value="C:plasma membrane"/>
    <property type="evidence" value="ECO:0007669"/>
    <property type="project" value="UniProtKB-SubCell"/>
</dbReference>
<dbReference type="GO" id="GO:0010181">
    <property type="term" value="F:FMN binding"/>
    <property type="evidence" value="ECO:0007669"/>
    <property type="project" value="UniProtKB-UniRule"/>
</dbReference>
<dbReference type="GO" id="GO:0016655">
    <property type="term" value="F:oxidoreductase activity, acting on NAD(P)H, quinone or similar compound as acceptor"/>
    <property type="evidence" value="ECO:0007669"/>
    <property type="project" value="UniProtKB-UniRule"/>
</dbReference>
<dbReference type="GO" id="GO:0006814">
    <property type="term" value="P:sodium ion transport"/>
    <property type="evidence" value="ECO:0007669"/>
    <property type="project" value="UniProtKB-UniRule"/>
</dbReference>
<dbReference type="HAMAP" id="MF_00427">
    <property type="entry name" value="NqrC"/>
    <property type="match status" value="1"/>
</dbReference>
<dbReference type="InterPro" id="IPR007329">
    <property type="entry name" value="FMN-bd"/>
</dbReference>
<dbReference type="InterPro" id="IPR010204">
    <property type="entry name" value="NqrC"/>
</dbReference>
<dbReference type="NCBIfam" id="TIGR01938">
    <property type="entry name" value="nqrC"/>
    <property type="match status" value="1"/>
</dbReference>
<dbReference type="NCBIfam" id="NF003746">
    <property type="entry name" value="PRK05346.1-1"/>
    <property type="match status" value="1"/>
</dbReference>
<dbReference type="NCBIfam" id="NF003749">
    <property type="entry name" value="PRK05346.1-5"/>
    <property type="match status" value="1"/>
</dbReference>
<dbReference type="PANTHER" id="PTHR37838">
    <property type="entry name" value="NA(+)-TRANSLOCATING NADH-QUINONE REDUCTASE SUBUNIT C"/>
    <property type="match status" value="1"/>
</dbReference>
<dbReference type="PANTHER" id="PTHR37838:SF1">
    <property type="entry name" value="NA(+)-TRANSLOCATING NADH-QUINONE REDUCTASE SUBUNIT C"/>
    <property type="match status" value="1"/>
</dbReference>
<dbReference type="Pfam" id="PF04205">
    <property type="entry name" value="FMN_bind"/>
    <property type="match status" value="1"/>
</dbReference>
<dbReference type="PIRSF" id="PIRSF009437">
    <property type="entry name" value="NQR-1_subunit_C"/>
    <property type="match status" value="1"/>
</dbReference>
<dbReference type="SMART" id="SM00900">
    <property type="entry name" value="FMN_bind"/>
    <property type="match status" value="1"/>
</dbReference>
<comment type="function">
    <text evidence="1">NQR complex catalyzes the reduction of ubiquinone-1 to ubiquinol by two successive reactions, coupled with the transport of Na(+) ions from the cytoplasm to the periplasm. NqrA to NqrE are probably involved in the second step, the conversion of ubisemiquinone to ubiquinol.</text>
</comment>
<comment type="catalytic activity">
    <reaction evidence="1">
        <text>a ubiquinone + n Na(+)(in) + NADH + H(+) = a ubiquinol + n Na(+)(out) + NAD(+)</text>
        <dbReference type="Rhea" id="RHEA:47748"/>
        <dbReference type="Rhea" id="RHEA-COMP:9565"/>
        <dbReference type="Rhea" id="RHEA-COMP:9566"/>
        <dbReference type="ChEBI" id="CHEBI:15378"/>
        <dbReference type="ChEBI" id="CHEBI:16389"/>
        <dbReference type="ChEBI" id="CHEBI:17976"/>
        <dbReference type="ChEBI" id="CHEBI:29101"/>
        <dbReference type="ChEBI" id="CHEBI:57540"/>
        <dbReference type="ChEBI" id="CHEBI:57945"/>
        <dbReference type="EC" id="7.2.1.1"/>
    </reaction>
</comment>
<comment type="cofactor">
    <cofactor evidence="1">
        <name>FMN</name>
        <dbReference type="ChEBI" id="CHEBI:58210"/>
    </cofactor>
</comment>
<comment type="subunit">
    <text evidence="1">Composed of six subunits; NqrA, NqrB, NqrC, NqrD, NqrE and NqrF.</text>
</comment>
<comment type="subcellular location">
    <subcellularLocation>
        <location evidence="1">Cell inner membrane</location>
        <topology evidence="1">Single-pass membrane protein</topology>
    </subcellularLocation>
</comment>
<comment type="similarity">
    <text evidence="1">Belongs to the NqrC family.</text>
</comment>
<accession>Q8DBJ4</accession>
<feature type="chain" id="PRO_0000214226" description="Na(+)-translocating NADH-quinone reductase subunit C">
    <location>
        <begin position="1"/>
        <end position="255"/>
    </location>
</feature>
<feature type="transmembrane region" description="Helical" evidence="1">
    <location>
        <begin position="11"/>
        <end position="31"/>
    </location>
</feature>
<feature type="modified residue" description="FMN phosphoryl threonine" evidence="1">
    <location>
        <position position="223"/>
    </location>
</feature>
<proteinExistence type="inferred from homology"/>
<name>NQRC_VIBVU</name>
<reference key="1">
    <citation type="submission" date="2002-12" db="EMBL/GenBank/DDBJ databases">
        <title>Complete genome sequence of Vibrio vulnificus CMCP6.</title>
        <authorList>
            <person name="Rhee J.H."/>
            <person name="Kim S.Y."/>
            <person name="Chung S.S."/>
            <person name="Kim J.J."/>
            <person name="Moon Y.H."/>
            <person name="Jeong H."/>
            <person name="Choy H.E."/>
        </authorList>
    </citation>
    <scope>NUCLEOTIDE SEQUENCE [LARGE SCALE GENOMIC DNA]</scope>
    <source>
        <strain>CMCP6</strain>
    </source>
</reference>
<gene>
    <name evidence="1" type="primary">nqrC</name>
    <name type="ordered locus">VV1_1823</name>
</gene>
<sequence length="255" mass="27129">MASNDSIKKTLGVVVGLSLVCSIIVSTAAVGLRDQQKANAVLDKQSKIIEVAGIDSKGKKVPELFAQYIEPRLVDFATGDFVDGNAATYDQRKAAKDPAQSIKLTAEQDDAKILRRANTGVVYLVKNGDSISKIILPVHGNGLWSMMYAFVAVETDGNTVSGITYYEQGETPGLGGEVENPSWRAQFVGKKLFDENHKPAIKVVKGGAPVGSEHGVDGLSGATLTSNGVQHTFDFWLGDMGFGPFLAKVRDGGLN</sequence>
<evidence type="ECO:0000255" key="1">
    <source>
        <dbReference type="HAMAP-Rule" id="MF_00427"/>
    </source>
</evidence>
<protein>
    <recommendedName>
        <fullName evidence="1">Na(+)-translocating NADH-quinone reductase subunit C</fullName>
        <shortName evidence="1">Na(+)-NQR subunit C</shortName>
        <shortName evidence="1">Na(+)-translocating NQR subunit C</shortName>
        <ecNumber evidence="1">7.2.1.1</ecNumber>
    </recommendedName>
    <alternativeName>
        <fullName evidence="1">NQR complex subunit C</fullName>
    </alternativeName>
    <alternativeName>
        <fullName evidence="1">NQR-1 subunit C</fullName>
    </alternativeName>
</protein>
<keyword id="KW-0997">Cell inner membrane</keyword>
<keyword id="KW-1003">Cell membrane</keyword>
<keyword id="KW-0285">Flavoprotein</keyword>
<keyword id="KW-0288">FMN</keyword>
<keyword id="KW-0406">Ion transport</keyword>
<keyword id="KW-0472">Membrane</keyword>
<keyword id="KW-0520">NAD</keyword>
<keyword id="KW-0597">Phosphoprotein</keyword>
<keyword id="KW-0915">Sodium</keyword>
<keyword id="KW-0739">Sodium transport</keyword>
<keyword id="KW-1278">Translocase</keyword>
<keyword id="KW-0812">Transmembrane</keyword>
<keyword id="KW-1133">Transmembrane helix</keyword>
<keyword id="KW-0813">Transport</keyword>
<keyword id="KW-0830">Ubiquinone</keyword>
<organism>
    <name type="scientific">Vibrio vulnificus (strain CMCP6)</name>
    <dbReference type="NCBI Taxonomy" id="216895"/>
    <lineage>
        <taxon>Bacteria</taxon>
        <taxon>Pseudomonadati</taxon>
        <taxon>Pseudomonadota</taxon>
        <taxon>Gammaproteobacteria</taxon>
        <taxon>Vibrionales</taxon>
        <taxon>Vibrionaceae</taxon>
        <taxon>Vibrio</taxon>
    </lineage>
</organism>